<gene>
    <name type="ordered locus">P9301_02431</name>
</gene>
<organism>
    <name type="scientific">Prochlorococcus marinus (strain MIT 9301)</name>
    <dbReference type="NCBI Taxonomy" id="167546"/>
    <lineage>
        <taxon>Bacteria</taxon>
        <taxon>Bacillati</taxon>
        <taxon>Cyanobacteriota</taxon>
        <taxon>Cyanophyceae</taxon>
        <taxon>Synechococcales</taxon>
        <taxon>Prochlorococcaceae</taxon>
        <taxon>Prochlorococcus</taxon>
    </lineage>
</organism>
<feature type="chain" id="PRO_1000147937" description="Probable aspartoacylase">
    <location>
        <begin position="1"/>
        <end position="301"/>
    </location>
</feature>
<feature type="binding site" evidence="1">
    <location>
        <position position="13"/>
    </location>
    <ligand>
        <name>Zn(2+)</name>
        <dbReference type="ChEBI" id="CHEBI:29105"/>
    </ligand>
</feature>
<feature type="binding site" evidence="1">
    <location>
        <position position="16"/>
    </location>
    <ligand>
        <name>Zn(2+)</name>
        <dbReference type="ChEBI" id="CHEBI:29105"/>
    </ligand>
</feature>
<feature type="binding site" evidence="1">
    <location>
        <position position="54"/>
    </location>
    <ligand>
        <name>substrate</name>
    </ligand>
</feature>
<feature type="binding site" evidence="1">
    <location>
        <begin position="61"/>
        <end position="62"/>
    </location>
    <ligand>
        <name>substrate</name>
    </ligand>
</feature>
<feature type="binding site" evidence="1">
    <location>
        <position position="105"/>
    </location>
    <ligand>
        <name>Zn(2+)</name>
        <dbReference type="ChEBI" id="CHEBI:29105"/>
    </ligand>
</feature>
<feature type="binding site" evidence="1">
    <location>
        <position position="163"/>
    </location>
    <ligand>
        <name>substrate</name>
    </ligand>
</feature>
<feature type="binding site" evidence="1">
    <location>
        <position position="273"/>
    </location>
    <ligand>
        <name>substrate</name>
    </ligand>
</feature>
<name>ASPA_PROM0</name>
<reference key="1">
    <citation type="journal article" date="2007" name="PLoS Genet.">
        <title>Patterns and implications of gene gain and loss in the evolution of Prochlorococcus.</title>
        <authorList>
            <person name="Kettler G.C."/>
            <person name="Martiny A.C."/>
            <person name="Huang K."/>
            <person name="Zucker J."/>
            <person name="Coleman M.L."/>
            <person name="Rodrigue S."/>
            <person name="Chen F."/>
            <person name="Lapidus A."/>
            <person name="Ferriera S."/>
            <person name="Johnson J."/>
            <person name="Steglich C."/>
            <person name="Church G.M."/>
            <person name="Richardson P."/>
            <person name="Chisholm S.W."/>
        </authorList>
    </citation>
    <scope>NUCLEOTIDE SEQUENCE [LARGE SCALE GENOMIC DNA]</scope>
    <source>
        <strain>MIT 9301</strain>
    </source>
</reference>
<protein>
    <recommendedName>
        <fullName evidence="1">Probable aspartoacylase</fullName>
        <ecNumber evidence="1">3.5.1.15</ecNumber>
    </recommendedName>
</protein>
<accession>A3PAU1</accession>
<keyword id="KW-0378">Hydrolase</keyword>
<keyword id="KW-0479">Metal-binding</keyword>
<keyword id="KW-1185">Reference proteome</keyword>
<keyword id="KW-0862">Zinc</keyword>
<dbReference type="EC" id="3.5.1.15" evidence="1"/>
<dbReference type="EMBL" id="CP000576">
    <property type="protein sequence ID" value="ABO16866.1"/>
    <property type="molecule type" value="Genomic_DNA"/>
</dbReference>
<dbReference type="RefSeq" id="WP_011862265.1">
    <property type="nucleotide sequence ID" value="NC_009091.1"/>
</dbReference>
<dbReference type="SMR" id="A3PAU1"/>
<dbReference type="STRING" id="167546.P9301_02431"/>
<dbReference type="KEGG" id="pmg:P9301_02431"/>
<dbReference type="eggNOG" id="COG2988">
    <property type="taxonomic scope" value="Bacteria"/>
</dbReference>
<dbReference type="HOGENOM" id="CLU_083292_0_0_3"/>
<dbReference type="OrthoDB" id="531770at2"/>
<dbReference type="Proteomes" id="UP000001430">
    <property type="component" value="Chromosome"/>
</dbReference>
<dbReference type="GO" id="GO:0005829">
    <property type="term" value="C:cytosol"/>
    <property type="evidence" value="ECO:0007669"/>
    <property type="project" value="TreeGrafter"/>
</dbReference>
<dbReference type="GO" id="GO:0019807">
    <property type="term" value="F:aspartoacylase activity"/>
    <property type="evidence" value="ECO:0007669"/>
    <property type="project" value="UniProtKB-UniRule"/>
</dbReference>
<dbReference type="GO" id="GO:0016788">
    <property type="term" value="F:hydrolase activity, acting on ester bonds"/>
    <property type="evidence" value="ECO:0007669"/>
    <property type="project" value="InterPro"/>
</dbReference>
<dbReference type="GO" id="GO:0008270">
    <property type="term" value="F:zinc ion binding"/>
    <property type="evidence" value="ECO:0007669"/>
    <property type="project" value="UniProtKB-UniRule"/>
</dbReference>
<dbReference type="Gene3D" id="2.20.25.160">
    <property type="match status" value="1"/>
</dbReference>
<dbReference type="Gene3D" id="3.40.630.10">
    <property type="entry name" value="Zn peptidases"/>
    <property type="match status" value="1"/>
</dbReference>
<dbReference type="HAMAP" id="MF_00704">
    <property type="entry name" value="Aspartoacylase"/>
    <property type="match status" value="1"/>
</dbReference>
<dbReference type="InterPro" id="IPR050178">
    <property type="entry name" value="AspA/AstE_fam"/>
</dbReference>
<dbReference type="InterPro" id="IPR016708">
    <property type="entry name" value="Aspartoacylase"/>
</dbReference>
<dbReference type="InterPro" id="IPR055438">
    <property type="entry name" value="AstE_AspA_cat"/>
</dbReference>
<dbReference type="InterPro" id="IPR007036">
    <property type="entry name" value="Aste_AspA_hybrid_dom"/>
</dbReference>
<dbReference type="NCBIfam" id="NF002601">
    <property type="entry name" value="PRK02259.1"/>
    <property type="match status" value="1"/>
</dbReference>
<dbReference type="PANTHER" id="PTHR15162">
    <property type="entry name" value="ASPARTOACYLASE"/>
    <property type="match status" value="1"/>
</dbReference>
<dbReference type="PANTHER" id="PTHR15162:SF7">
    <property type="entry name" value="SUCCINYLGLUTAMATE DESUCCINYLASE"/>
    <property type="match status" value="1"/>
</dbReference>
<dbReference type="Pfam" id="PF24827">
    <property type="entry name" value="AstE_AspA_cat"/>
    <property type="match status" value="1"/>
</dbReference>
<dbReference type="Pfam" id="PF04952">
    <property type="entry name" value="AstE_AspA_hybrid"/>
    <property type="match status" value="1"/>
</dbReference>
<dbReference type="PIRSF" id="PIRSF018001">
    <property type="entry name" value="Aspartoacylase"/>
    <property type="match status" value="1"/>
</dbReference>
<dbReference type="SUPFAM" id="SSF53187">
    <property type="entry name" value="Zn-dependent exopeptidases"/>
    <property type="match status" value="1"/>
</dbReference>
<comment type="catalytic activity">
    <reaction evidence="1">
        <text>an N-acyl-L-aspartate + H2O = a carboxylate + L-aspartate</text>
        <dbReference type="Rhea" id="RHEA:10872"/>
        <dbReference type="ChEBI" id="CHEBI:15377"/>
        <dbReference type="ChEBI" id="CHEBI:29067"/>
        <dbReference type="ChEBI" id="CHEBI:29991"/>
        <dbReference type="ChEBI" id="CHEBI:58497"/>
        <dbReference type="EC" id="3.5.1.15"/>
    </reaction>
</comment>
<comment type="cofactor">
    <cofactor evidence="1">
        <name>Zn(2+)</name>
        <dbReference type="ChEBI" id="CHEBI:29105"/>
    </cofactor>
    <text evidence="1">Binds 1 zinc ion per subunit.</text>
</comment>
<comment type="similarity">
    <text evidence="1">Belongs to the AspA/AstE family. Aspartoacylase subfamily.</text>
</comment>
<sequence length="301" mass="34544">MTVQRILIVSGTHGNEINPVWAVKQFSRKENSLNNGIEYEYIIGNPAAYEKGCRYIDVDLNRSFKESGNFDQHKNSFYETNRANFLVDEFGIDGSKPCQIAIDLHTTTANMGTSIVMYGRRSKDFCLAALLQNKFGLPIYLHEKDKAQTGFLVEAWPCGLVIEIGAVAQNFYDQNIVNRFSLIIGSLREEIDKLKNKLVELPKELVVHVHQGSIDYPRDEKGDIDGIIHPARINQDWKMIKKGDPLFLDSQGIIHKYERDKLIWPVFIGEVAYKEKKIAMSYTKKEVICSKKQWVQEFESF</sequence>
<evidence type="ECO:0000255" key="1">
    <source>
        <dbReference type="HAMAP-Rule" id="MF_00704"/>
    </source>
</evidence>
<proteinExistence type="inferred from homology"/>